<keyword id="KW-0027">Amidation</keyword>
<keyword id="KW-0903">Direct protein sequencing</keyword>
<keyword id="KW-0527">Neuropeptide</keyword>
<proteinExistence type="evidence at protein level"/>
<organism>
    <name type="scientific">Delia radicum</name>
    <name type="common">Cabbage root fly</name>
    <name type="synonym">Anthomyia brassicae</name>
    <dbReference type="NCBI Taxonomy" id="30064"/>
    <lineage>
        <taxon>Eukaryota</taxon>
        <taxon>Metazoa</taxon>
        <taxon>Ecdysozoa</taxon>
        <taxon>Arthropoda</taxon>
        <taxon>Hexapoda</taxon>
        <taxon>Insecta</taxon>
        <taxon>Pterygota</taxon>
        <taxon>Neoptera</taxon>
        <taxon>Endopterygota</taxon>
        <taxon>Diptera</taxon>
        <taxon>Brachycera</taxon>
        <taxon>Muscomorpha</taxon>
        <taxon>Muscoidea</taxon>
        <taxon>Anthomyiidae</taxon>
        <taxon>Anthomyiinae</taxon>
        <taxon>Delia</taxon>
    </lineage>
</organism>
<comment type="tissue specificity">
    <text evidence="1">Expressed in the CNS and the ring gland but not in midgut, thoracic perisympathetic organs (tPSO) or abdominal perisympathetic organs (aPSO) (at protein level).</text>
</comment>
<comment type="developmental stage">
    <text evidence="1">Detected in larvae.</text>
</comment>
<comment type="mass spectrometry" mass="948.5" method="MALDI" evidence="1"/>
<evidence type="ECO:0000269" key="1">
    <source>
    </source>
</evidence>
<evidence type="ECO:0000303" key="2">
    <source>
    </source>
</evidence>
<evidence type="ECO:0000305" key="3"/>
<sequence length="8" mass="949">LPSIGHYY</sequence>
<accession>B3EWK9</accession>
<name>YAMD_DELRA</name>
<protein>
    <recommendedName>
        <fullName evidence="2">Neuropeptide Y-amide</fullName>
    </recommendedName>
</protein>
<dbReference type="GO" id="GO:0007218">
    <property type="term" value="P:neuropeptide signaling pathway"/>
    <property type="evidence" value="ECO:0007669"/>
    <property type="project" value="UniProtKB-KW"/>
</dbReference>
<feature type="peptide" id="PRO_0000419727" description="Neuropeptide Y-amide" evidence="1">
    <location>
        <begin position="1"/>
        <end position="8"/>
    </location>
</feature>
<feature type="modified residue" description="Tyrosine amide" evidence="1">
    <location>
        <position position="8"/>
    </location>
</feature>
<feature type="unsure residue" description="L or I" evidence="1">
    <location>
        <position position="1"/>
    </location>
</feature>
<feature type="unsure residue" description="I or L" evidence="1">
    <location>
        <position position="4"/>
    </location>
</feature>
<reference evidence="3" key="1">
    <citation type="journal article" date="2012" name="PLoS ONE">
        <title>Peptidomics of the agriculturally damaging larval stage of the cabbage root fly Delia radicum (Diptera: Anthomyiidae).</title>
        <authorList>
            <person name="Zoephel J."/>
            <person name="Reiher W."/>
            <person name="Rexer K.-H."/>
            <person name="Kahnt J."/>
            <person name="Wegener C."/>
        </authorList>
    </citation>
    <scope>PROTEIN SEQUENCE</scope>
    <scope>TISSUE SPECIFICITY</scope>
    <scope>DEVELOPMENTAL STAGE</scope>
    <scope>MASS SPECTROMETRY</scope>
    <scope>AMIDATION AT TYR-8</scope>
    <source>
        <tissue evidence="1">CNS</tissue>
        <tissue evidence="1">Ring ganglion</tissue>
    </source>
</reference>